<accession>Q9ZP21</accession>
<comment type="function">
    <text evidence="1">Participates in various redox reactions through the reversible oxidation of the active center dithiol to a disulfide. The M form is known to activate NADP-malate dehydrogenase (By similarity).</text>
</comment>
<comment type="subunit">
    <text evidence="1">Forms a complex with heterodimeric ferredoxin-thioredoxin reductase (FTR) and ferredoxin.</text>
</comment>
<comment type="subcellular location">
    <subcellularLocation>
        <location evidence="1">Plastid</location>
        <location evidence="1">Chloroplast</location>
    </subcellularLocation>
</comment>
<comment type="similarity">
    <text evidence="4">Belongs to the thioredoxin family. Plant M-type subfamily.</text>
</comment>
<evidence type="ECO:0000250" key="1"/>
<evidence type="ECO:0000255" key="2"/>
<evidence type="ECO:0000255" key="3">
    <source>
        <dbReference type="PROSITE-ProRule" id="PRU00691"/>
    </source>
</evidence>
<evidence type="ECO:0000305" key="4"/>
<feature type="transit peptide" description="Chloroplast" evidence="2">
    <location>
        <begin position="1"/>
        <end position="62"/>
    </location>
</feature>
<feature type="chain" id="PRO_0000034179" description="Thioredoxin M-type, chloroplastic">
    <location>
        <begin position="63"/>
        <end position="175"/>
    </location>
</feature>
<feature type="domain" description="Thioredoxin" evidence="3">
    <location>
        <begin position="63"/>
        <end position="174"/>
    </location>
</feature>
<feature type="disulfide bond" description="Redox-active" evidence="3">
    <location>
        <begin position="98"/>
        <end position="101"/>
    </location>
</feature>
<reference key="1">
    <citation type="submission" date="1998-04" db="EMBL/GenBank/DDBJ databases">
        <title>The thioredoxins m and f of plants and their role in the redox regulation of chloroplast enxymes.</title>
        <authorList>
            <person name="Dyer T.A."/>
            <person name="Catley M.A."/>
            <person name="Robertson E.J."/>
            <person name="Dunford R.P."/>
        </authorList>
    </citation>
    <scope>NUCLEOTIDE SEQUENCE [MRNA]</scope>
</reference>
<name>TRXM_WHEAT</name>
<organism>
    <name type="scientific">Triticum aestivum</name>
    <name type="common">Wheat</name>
    <dbReference type="NCBI Taxonomy" id="4565"/>
    <lineage>
        <taxon>Eukaryota</taxon>
        <taxon>Viridiplantae</taxon>
        <taxon>Streptophyta</taxon>
        <taxon>Embryophyta</taxon>
        <taxon>Tracheophyta</taxon>
        <taxon>Spermatophyta</taxon>
        <taxon>Magnoliopsida</taxon>
        <taxon>Liliopsida</taxon>
        <taxon>Poales</taxon>
        <taxon>Poaceae</taxon>
        <taxon>BOP clade</taxon>
        <taxon>Pooideae</taxon>
        <taxon>Triticodae</taxon>
        <taxon>Triticeae</taxon>
        <taxon>Triticinae</taxon>
        <taxon>Triticum</taxon>
    </lineage>
</organism>
<sequence>MALETCLRGWALYAPQAGIRERLSSGSYAPSRPRTAAPAVVSPSPYKSALVAARRPSRFVCKCKNVVDEVIVADEKNWDNMVIACESPVLVEFWAPWCGPCRMIAPVIDELAKDYVGKIKCCKVNTDDCPNIASTYGIRSIPTVLMFKDGEKKESVIGAVPKTTLCTIIDKYIGS</sequence>
<protein>
    <recommendedName>
        <fullName>Thioredoxin M-type, chloroplastic</fullName>
        <shortName>Trx-M</shortName>
    </recommendedName>
</protein>
<dbReference type="EMBL" id="AJ005840">
    <property type="protein sequence ID" value="CAA06735.1"/>
    <property type="molecule type" value="mRNA"/>
</dbReference>
<dbReference type="RefSeq" id="NP_001414860.1">
    <property type="nucleotide sequence ID" value="NM_001427931.1"/>
</dbReference>
<dbReference type="SMR" id="Q9ZP21"/>
<dbReference type="STRING" id="4565.Q9ZP21"/>
<dbReference type="PaxDb" id="4565-Traes_5BS_B72CD04F2.1"/>
<dbReference type="EnsemblPlants" id="TraesARI7B03G04160330.1">
    <property type="protein sequence ID" value="TraesARI7B03G04160330.1"/>
    <property type="gene ID" value="TraesARI7B03G04160330"/>
</dbReference>
<dbReference type="EnsemblPlants" id="TraesCAD_scaffold_024492_01G000100.1">
    <property type="protein sequence ID" value="TraesCAD_scaffold_024492_01G000100.1"/>
    <property type="gene ID" value="TraesCAD_scaffold_024492_01G000100"/>
</dbReference>
<dbReference type="EnsemblPlants" id="TraesCLE_scaffold_009635_01G000100.1">
    <property type="protein sequence ID" value="TraesCLE_scaffold_009635_01G000100.1"/>
    <property type="gene ID" value="TraesCLE_scaffold_009635_01G000100"/>
</dbReference>
<dbReference type="EnsemblPlants" id="TraesCS5B02G111800.1">
    <property type="protein sequence ID" value="TraesCS5B02G111800.1"/>
    <property type="gene ID" value="TraesCS5B02G111800"/>
</dbReference>
<dbReference type="EnsemblPlants" id="TraesCS5B03G0294300.1">
    <property type="protein sequence ID" value="TraesCS5B03G0294300.1.CDS"/>
    <property type="gene ID" value="TraesCS5B03G0294300"/>
</dbReference>
<dbReference type="EnsemblPlants" id="TraesJAG5B03G02840210.1">
    <property type="protein sequence ID" value="TraesJAG5B03G02840210.1"/>
    <property type="gene ID" value="TraesJAG5B03G02840210"/>
</dbReference>
<dbReference type="EnsemblPlants" id="TraesJUL5B03G02861070.1">
    <property type="protein sequence ID" value="TraesJUL5B03G02861070.1"/>
    <property type="gene ID" value="TraesJUL5B03G02861070"/>
</dbReference>
<dbReference type="EnsemblPlants" id="TraesKAR5B01G0114110.1">
    <property type="protein sequence ID" value="cds.TraesKAR5B01G0114110.1"/>
    <property type="gene ID" value="TraesKAR5B01G0114110"/>
</dbReference>
<dbReference type="EnsemblPlants" id="TraesLAC5B03G02795010.1">
    <property type="protein sequence ID" value="TraesLAC5B03G02795010.1"/>
    <property type="gene ID" value="TraesLAC5B03G02795010"/>
</dbReference>
<dbReference type="EnsemblPlants" id="TraesLDM5B03G02843320.1">
    <property type="protein sequence ID" value="TraesLDM5B03G02843320.1"/>
    <property type="gene ID" value="TraesLDM5B03G02843320"/>
</dbReference>
<dbReference type="EnsemblPlants" id="TraesMACUn03G04541880.1">
    <property type="protein sequence ID" value="TraesMACUn03G04541880.1"/>
    <property type="gene ID" value="TraesMACUn03G04541880"/>
</dbReference>
<dbReference type="EnsemblPlants" id="TraesMACUn03G04542070.1">
    <property type="protein sequence ID" value="TraesMACUn03G04542070.1"/>
    <property type="gene ID" value="TraesMACUn03G04542070"/>
</dbReference>
<dbReference type="EnsemblPlants" id="TraesNOR5B03G02867690.1">
    <property type="protein sequence ID" value="TraesNOR5B03G02867690.1"/>
    <property type="gene ID" value="TraesNOR5B03G02867690"/>
</dbReference>
<dbReference type="EnsemblPlants" id="TraesPARA_EIv1.0_1656380.1">
    <property type="protein sequence ID" value="TraesPARA_EIv1.0_1656380.1.CDS"/>
    <property type="gene ID" value="TraesPARA_EIv1.0_1656380"/>
</dbReference>
<dbReference type="EnsemblPlants" id="TraesROB_scaffold_109278_01G000100.1">
    <property type="protein sequence ID" value="TraesROB_scaffold_109278_01G000100.1"/>
    <property type="gene ID" value="TraesROB_scaffold_109278_01G000100"/>
</dbReference>
<dbReference type="EnsemblPlants" id="TraesSTA5B03G02832520.1">
    <property type="protein sequence ID" value="TraesSTA5B03G02832520.1"/>
    <property type="gene ID" value="TraesSTA5B03G02832520"/>
</dbReference>
<dbReference type="EnsemblPlants" id="TraesWEE_scaffold_177150_01G000100.1">
    <property type="protein sequence ID" value="TraesWEE_scaffold_177150_01G000100.1"/>
    <property type="gene ID" value="TraesWEE_scaffold_177150_01G000100"/>
</dbReference>
<dbReference type="GeneID" id="542973"/>
<dbReference type="Gramene" id="TraesARI7B03G04160330.1">
    <property type="protein sequence ID" value="TraesARI7B03G04160330.1"/>
    <property type="gene ID" value="TraesARI7B03G04160330"/>
</dbReference>
<dbReference type="Gramene" id="TraesCAD_scaffold_024492_01G000100.1">
    <property type="protein sequence ID" value="TraesCAD_scaffold_024492_01G000100.1"/>
    <property type="gene ID" value="TraesCAD_scaffold_024492_01G000100"/>
</dbReference>
<dbReference type="Gramene" id="TraesCLE_scaffold_009635_01G000100.1">
    <property type="protein sequence ID" value="TraesCLE_scaffold_009635_01G000100.1"/>
    <property type="gene ID" value="TraesCLE_scaffold_009635_01G000100"/>
</dbReference>
<dbReference type="Gramene" id="TraesCS5B02G111800.1">
    <property type="protein sequence ID" value="TraesCS5B02G111800.1"/>
    <property type="gene ID" value="TraesCS5B02G111800"/>
</dbReference>
<dbReference type="Gramene" id="TraesCS5B03G0294300.1">
    <property type="protein sequence ID" value="TraesCS5B03G0294300.1.CDS"/>
    <property type="gene ID" value="TraesCS5B03G0294300"/>
</dbReference>
<dbReference type="Gramene" id="TraesJAG5B03G02840210.1">
    <property type="protein sequence ID" value="TraesJAG5B03G02840210.1"/>
    <property type="gene ID" value="TraesJAG5B03G02840210"/>
</dbReference>
<dbReference type="Gramene" id="TraesJUL5B03G02861070.1">
    <property type="protein sequence ID" value="TraesJUL5B03G02861070.1"/>
    <property type="gene ID" value="TraesJUL5B03G02861070"/>
</dbReference>
<dbReference type="Gramene" id="TraesKAR5B01G0114110.1">
    <property type="protein sequence ID" value="cds.TraesKAR5B01G0114110.1"/>
    <property type="gene ID" value="TraesKAR5B01G0114110"/>
</dbReference>
<dbReference type="Gramene" id="TraesLAC5B03G02795010.1">
    <property type="protein sequence ID" value="TraesLAC5B03G02795010.1"/>
    <property type="gene ID" value="TraesLAC5B03G02795010"/>
</dbReference>
<dbReference type="Gramene" id="TraesLDM5B03G02843320.1">
    <property type="protein sequence ID" value="TraesLDM5B03G02843320.1"/>
    <property type="gene ID" value="TraesLDM5B03G02843320"/>
</dbReference>
<dbReference type="Gramene" id="TraesMACUn03G04541880.1">
    <property type="protein sequence ID" value="TraesMACUn03G04541880.1"/>
    <property type="gene ID" value="TraesMACUn03G04541880"/>
</dbReference>
<dbReference type="Gramene" id="TraesMACUn03G04542070.1">
    <property type="protein sequence ID" value="TraesMACUn03G04542070.1"/>
    <property type="gene ID" value="TraesMACUn03G04542070"/>
</dbReference>
<dbReference type="Gramene" id="TraesNOR5B03G02867690.1">
    <property type="protein sequence ID" value="TraesNOR5B03G02867690.1"/>
    <property type="gene ID" value="TraesNOR5B03G02867690"/>
</dbReference>
<dbReference type="Gramene" id="TraesPARA_EIv1.0_1656380.1">
    <property type="protein sequence ID" value="TraesPARA_EIv1.0_1656380.1.CDS"/>
    <property type="gene ID" value="TraesPARA_EIv1.0_1656380"/>
</dbReference>
<dbReference type="Gramene" id="TraesROB_scaffold_109278_01G000100.1">
    <property type="protein sequence ID" value="TraesROB_scaffold_109278_01G000100.1"/>
    <property type="gene ID" value="TraesROB_scaffold_109278_01G000100"/>
</dbReference>
<dbReference type="Gramene" id="TraesSTA5B03G02832520.1">
    <property type="protein sequence ID" value="TraesSTA5B03G02832520.1"/>
    <property type="gene ID" value="TraesSTA5B03G02832520"/>
</dbReference>
<dbReference type="Gramene" id="TraesWEE_scaffold_177150_01G000100.1">
    <property type="protein sequence ID" value="TraesWEE_scaffold_177150_01G000100.1"/>
    <property type="gene ID" value="TraesWEE_scaffold_177150_01G000100"/>
</dbReference>
<dbReference type="eggNOG" id="KOG0910">
    <property type="taxonomic scope" value="Eukaryota"/>
</dbReference>
<dbReference type="HOGENOM" id="CLU_090389_0_2_1"/>
<dbReference type="OMA" id="RMITPVI"/>
<dbReference type="OrthoDB" id="2121326at2759"/>
<dbReference type="Proteomes" id="UP000019116">
    <property type="component" value="Chromosome 5B"/>
</dbReference>
<dbReference type="GO" id="GO:0009507">
    <property type="term" value="C:chloroplast"/>
    <property type="evidence" value="ECO:0007669"/>
    <property type="project" value="UniProtKB-SubCell"/>
</dbReference>
<dbReference type="GO" id="GO:0005737">
    <property type="term" value="C:cytoplasm"/>
    <property type="evidence" value="ECO:0000318"/>
    <property type="project" value="GO_Central"/>
</dbReference>
<dbReference type="GO" id="GO:0015035">
    <property type="term" value="F:protein-disulfide reductase activity"/>
    <property type="evidence" value="ECO:0000318"/>
    <property type="project" value="GO_Central"/>
</dbReference>
<dbReference type="CDD" id="cd02947">
    <property type="entry name" value="TRX_family"/>
    <property type="match status" value="1"/>
</dbReference>
<dbReference type="FunFam" id="3.40.30.10:FF:000001">
    <property type="entry name" value="Thioredoxin"/>
    <property type="match status" value="1"/>
</dbReference>
<dbReference type="Gene3D" id="3.40.30.10">
    <property type="entry name" value="Glutaredoxin"/>
    <property type="match status" value="1"/>
</dbReference>
<dbReference type="InterPro" id="IPR005746">
    <property type="entry name" value="Thioredoxin"/>
</dbReference>
<dbReference type="InterPro" id="IPR036249">
    <property type="entry name" value="Thioredoxin-like_sf"/>
</dbReference>
<dbReference type="InterPro" id="IPR017937">
    <property type="entry name" value="Thioredoxin_CS"/>
</dbReference>
<dbReference type="InterPro" id="IPR013766">
    <property type="entry name" value="Thioredoxin_domain"/>
</dbReference>
<dbReference type="NCBIfam" id="TIGR01068">
    <property type="entry name" value="thioredoxin"/>
    <property type="match status" value="1"/>
</dbReference>
<dbReference type="PANTHER" id="PTHR45663">
    <property type="entry name" value="GEO12009P1"/>
    <property type="match status" value="1"/>
</dbReference>
<dbReference type="PANTHER" id="PTHR45663:SF42">
    <property type="entry name" value="THIOREDOXIN M5, CHLOROPLASTIC"/>
    <property type="match status" value="1"/>
</dbReference>
<dbReference type="Pfam" id="PF00085">
    <property type="entry name" value="Thioredoxin"/>
    <property type="match status" value="1"/>
</dbReference>
<dbReference type="PRINTS" id="PR00421">
    <property type="entry name" value="THIOREDOXIN"/>
</dbReference>
<dbReference type="SUPFAM" id="SSF52833">
    <property type="entry name" value="Thioredoxin-like"/>
    <property type="match status" value="1"/>
</dbReference>
<dbReference type="PROSITE" id="PS00194">
    <property type="entry name" value="THIOREDOXIN_1"/>
    <property type="match status" value="1"/>
</dbReference>
<dbReference type="PROSITE" id="PS51352">
    <property type="entry name" value="THIOREDOXIN_2"/>
    <property type="match status" value="1"/>
</dbReference>
<proteinExistence type="evidence at transcript level"/>
<keyword id="KW-0150">Chloroplast</keyword>
<keyword id="KW-1015">Disulfide bond</keyword>
<keyword id="KW-0249">Electron transport</keyword>
<keyword id="KW-0934">Plastid</keyword>
<keyword id="KW-0676">Redox-active center</keyword>
<keyword id="KW-1185">Reference proteome</keyword>
<keyword id="KW-0809">Transit peptide</keyword>
<keyword id="KW-0813">Transport</keyword>